<protein>
    <recommendedName>
        <fullName evidence="1">Small ribosomal subunit protein uS4</fullName>
    </recommendedName>
    <alternativeName>
        <fullName evidence="2">30S ribosomal protein S4</fullName>
    </alternativeName>
</protein>
<sequence>MARYIGPKCKLARREGTDLFLKSGVRAIESKCNIEAAPGIHGQRRGRQSDYGTQLREKQKVRRIYGVLERQFSGYYKQAAGKKGATGENLLQLLECRLDNVVYRMGFGSTRAESRQLVSHKSISVNGQTVNVPSYQVRAGDVVAVREKAKNQLRIVQALDLCAQRGRVEWVEVDTEKKSGVFKNVPARSDLSADINESLIVELYSK</sequence>
<organism>
    <name type="scientific">Pseudomonas fluorescens (strain ATCC BAA-477 / NRRL B-23932 / Pf-5)</name>
    <dbReference type="NCBI Taxonomy" id="220664"/>
    <lineage>
        <taxon>Bacteria</taxon>
        <taxon>Pseudomonadati</taxon>
        <taxon>Pseudomonadota</taxon>
        <taxon>Gammaproteobacteria</taxon>
        <taxon>Pseudomonadales</taxon>
        <taxon>Pseudomonadaceae</taxon>
        <taxon>Pseudomonas</taxon>
    </lineage>
</organism>
<gene>
    <name evidence="1" type="primary">rpsD</name>
    <name type="ordered locus">PFL_5559</name>
</gene>
<accession>Q4K556</accession>
<reference key="1">
    <citation type="journal article" date="2005" name="Nat. Biotechnol.">
        <title>Complete genome sequence of the plant commensal Pseudomonas fluorescens Pf-5.</title>
        <authorList>
            <person name="Paulsen I.T."/>
            <person name="Press C.M."/>
            <person name="Ravel J."/>
            <person name="Kobayashi D.Y."/>
            <person name="Myers G.S.A."/>
            <person name="Mavrodi D.V."/>
            <person name="DeBoy R.T."/>
            <person name="Seshadri R."/>
            <person name="Ren Q."/>
            <person name="Madupu R."/>
            <person name="Dodson R.J."/>
            <person name="Durkin A.S."/>
            <person name="Brinkac L.M."/>
            <person name="Daugherty S.C."/>
            <person name="Sullivan S.A."/>
            <person name="Rosovitz M.J."/>
            <person name="Gwinn M.L."/>
            <person name="Zhou L."/>
            <person name="Schneider D.J."/>
            <person name="Cartinhour S.W."/>
            <person name="Nelson W.C."/>
            <person name="Weidman J."/>
            <person name="Watkins K."/>
            <person name="Tran K."/>
            <person name="Khouri H."/>
            <person name="Pierson E.A."/>
            <person name="Pierson L.S. III"/>
            <person name="Thomashow L.S."/>
            <person name="Loper J.E."/>
        </authorList>
    </citation>
    <scope>NUCLEOTIDE SEQUENCE [LARGE SCALE GENOMIC DNA]</scope>
    <source>
        <strain>ATCC BAA-477 / NRRL B-23932 / Pf-5</strain>
    </source>
</reference>
<evidence type="ECO:0000255" key="1">
    <source>
        <dbReference type="HAMAP-Rule" id="MF_01306"/>
    </source>
</evidence>
<evidence type="ECO:0000305" key="2"/>
<dbReference type="EMBL" id="CP000076">
    <property type="protein sequence ID" value="AAY94765.1"/>
    <property type="molecule type" value="Genomic_DNA"/>
</dbReference>
<dbReference type="RefSeq" id="WP_011063772.1">
    <property type="nucleotide sequence ID" value="NC_004129.6"/>
</dbReference>
<dbReference type="SMR" id="Q4K556"/>
<dbReference type="STRING" id="220664.PFL_5559"/>
<dbReference type="GeneID" id="57478507"/>
<dbReference type="KEGG" id="pfl:PFL_5559"/>
<dbReference type="eggNOG" id="COG0522">
    <property type="taxonomic scope" value="Bacteria"/>
</dbReference>
<dbReference type="HOGENOM" id="CLU_092403_0_2_6"/>
<dbReference type="Proteomes" id="UP000008540">
    <property type="component" value="Chromosome"/>
</dbReference>
<dbReference type="GO" id="GO:0015935">
    <property type="term" value="C:small ribosomal subunit"/>
    <property type="evidence" value="ECO:0007669"/>
    <property type="project" value="InterPro"/>
</dbReference>
<dbReference type="GO" id="GO:0019843">
    <property type="term" value="F:rRNA binding"/>
    <property type="evidence" value="ECO:0007669"/>
    <property type="project" value="UniProtKB-UniRule"/>
</dbReference>
<dbReference type="GO" id="GO:0003735">
    <property type="term" value="F:structural constituent of ribosome"/>
    <property type="evidence" value="ECO:0007669"/>
    <property type="project" value="InterPro"/>
</dbReference>
<dbReference type="GO" id="GO:0042274">
    <property type="term" value="P:ribosomal small subunit biogenesis"/>
    <property type="evidence" value="ECO:0007669"/>
    <property type="project" value="TreeGrafter"/>
</dbReference>
<dbReference type="GO" id="GO:0006412">
    <property type="term" value="P:translation"/>
    <property type="evidence" value="ECO:0007669"/>
    <property type="project" value="UniProtKB-UniRule"/>
</dbReference>
<dbReference type="CDD" id="cd00165">
    <property type="entry name" value="S4"/>
    <property type="match status" value="1"/>
</dbReference>
<dbReference type="FunFam" id="1.10.1050.10:FF:000001">
    <property type="entry name" value="30S ribosomal protein S4"/>
    <property type="match status" value="1"/>
</dbReference>
<dbReference type="FunFam" id="3.10.290.10:FF:000001">
    <property type="entry name" value="30S ribosomal protein S4"/>
    <property type="match status" value="1"/>
</dbReference>
<dbReference type="Gene3D" id="1.10.1050.10">
    <property type="entry name" value="Ribosomal Protein S4 Delta 41, Chain A, domain 1"/>
    <property type="match status" value="1"/>
</dbReference>
<dbReference type="Gene3D" id="3.10.290.10">
    <property type="entry name" value="RNA-binding S4 domain"/>
    <property type="match status" value="1"/>
</dbReference>
<dbReference type="HAMAP" id="MF_01306_B">
    <property type="entry name" value="Ribosomal_uS4_B"/>
    <property type="match status" value="1"/>
</dbReference>
<dbReference type="InterPro" id="IPR022801">
    <property type="entry name" value="Ribosomal_uS4"/>
</dbReference>
<dbReference type="InterPro" id="IPR005709">
    <property type="entry name" value="Ribosomal_uS4_bac-type"/>
</dbReference>
<dbReference type="InterPro" id="IPR018079">
    <property type="entry name" value="Ribosomal_uS4_CS"/>
</dbReference>
<dbReference type="InterPro" id="IPR001912">
    <property type="entry name" value="Ribosomal_uS4_N"/>
</dbReference>
<dbReference type="InterPro" id="IPR002942">
    <property type="entry name" value="S4_RNA-bd"/>
</dbReference>
<dbReference type="InterPro" id="IPR036986">
    <property type="entry name" value="S4_RNA-bd_sf"/>
</dbReference>
<dbReference type="NCBIfam" id="NF003717">
    <property type="entry name" value="PRK05327.1"/>
    <property type="match status" value="1"/>
</dbReference>
<dbReference type="NCBIfam" id="TIGR01017">
    <property type="entry name" value="rpsD_bact"/>
    <property type="match status" value="1"/>
</dbReference>
<dbReference type="PANTHER" id="PTHR11831">
    <property type="entry name" value="30S 40S RIBOSOMAL PROTEIN"/>
    <property type="match status" value="1"/>
</dbReference>
<dbReference type="PANTHER" id="PTHR11831:SF4">
    <property type="entry name" value="SMALL RIBOSOMAL SUBUNIT PROTEIN US4M"/>
    <property type="match status" value="1"/>
</dbReference>
<dbReference type="Pfam" id="PF00163">
    <property type="entry name" value="Ribosomal_S4"/>
    <property type="match status" value="1"/>
</dbReference>
<dbReference type="Pfam" id="PF01479">
    <property type="entry name" value="S4"/>
    <property type="match status" value="1"/>
</dbReference>
<dbReference type="SMART" id="SM01390">
    <property type="entry name" value="Ribosomal_S4"/>
    <property type="match status" value="1"/>
</dbReference>
<dbReference type="SMART" id="SM00363">
    <property type="entry name" value="S4"/>
    <property type="match status" value="1"/>
</dbReference>
<dbReference type="SUPFAM" id="SSF55174">
    <property type="entry name" value="Alpha-L RNA-binding motif"/>
    <property type="match status" value="1"/>
</dbReference>
<dbReference type="PROSITE" id="PS00632">
    <property type="entry name" value="RIBOSOMAL_S4"/>
    <property type="match status" value="1"/>
</dbReference>
<dbReference type="PROSITE" id="PS50889">
    <property type="entry name" value="S4"/>
    <property type="match status" value="1"/>
</dbReference>
<keyword id="KW-0687">Ribonucleoprotein</keyword>
<keyword id="KW-0689">Ribosomal protein</keyword>
<keyword id="KW-0694">RNA-binding</keyword>
<keyword id="KW-0699">rRNA-binding</keyword>
<proteinExistence type="inferred from homology"/>
<feature type="chain" id="PRO_0000228914" description="Small ribosomal subunit protein uS4">
    <location>
        <begin position="1"/>
        <end position="206"/>
    </location>
</feature>
<feature type="domain" description="S4 RNA-binding" evidence="1">
    <location>
        <begin position="96"/>
        <end position="156"/>
    </location>
</feature>
<comment type="function">
    <text evidence="1">One of the primary rRNA binding proteins, it binds directly to 16S rRNA where it nucleates assembly of the body of the 30S subunit.</text>
</comment>
<comment type="function">
    <text evidence="1">With S5 and S12 plays an important role in translational accuracy.</text>
</comment>
<comment type="subunit">
    <text evidence="1">Part of the 30S ribosomal subunit. Contacts protein S5. The interaction surface between S4 and S5 is involved in control of translational fidelity.</text>
</comment>
<comment type="similarity">
    <text evidence="1">Belongs to the universal ribosomal protein uS4 family.</text>
</comment>
<name>RS4_PSEF5</name>